<accession>Q60EC2</accession>
<accession>A0A0P0WMM5</accession>
<proteinExistence type="evidence at protein level"/>
<evidence type="ECO:0000255" key="1"/>
<evidence type="ECO:0000256" key="2">
    <source>
        <dbReference type="SAM" id="MobiDB-lite"/>
    </source>
</evidence>
<evidence type="ECO:0000269" key="3">
    <source>
    </source>
</evidence>
<evidence type="ECO:0000305" key="4"/>
<comment type="function">
    <text evidence="3">Mediates transport of sugars across the plasma membrane (PubMed:38183427). Can transport glucose and galactose, but not fructose, mannose and sucrose (PubMed:38183427).</text>
</comment>
<comment type="catalytic activity">
    <reaction evidence="3">
        <text>D-glucose(out) = D-glucose(in)</text>
        <dbReference type="Rhea" id="RHEA:60376"/>
        <dbReference type="ChEBI" id="CHEBI:4167"/>
    </reaction>
</comment>
<comment type="catalytic activity">
    <reaction evidence="3">
        <text>D-galactose(in) = D-galactose(out)</text>
        <dbReference type="Rhea" id="RHEA:34915"/>
        <dbReference type="ChEBI" id="CHEBI:4139"/>
    </reaction>
</comment>
<comment type="subunit">
    <text evidence="3">Forms homodimers.</text>
</comment>
<comment type="subcellular location">
    <subcellularLocation>
        <location evidence="3">Cell membrane</location>
        <topology evidence="1">Multi-pass membrane protein</topology>
    </subcellularLocation>
</comment>
<comment type="tissue specificity">
    <text evidence="3">Highly expressed in leaves (PubMed:38183427). Expressed at very low levels in roots, stems and panicles (PubMed:38183427).</text>
</comment>
<comment type="disruption phenotype">
    <text evidence="3">Reduced contents of sucrose, glucose, fructose, starch and galactose (PubMed:38183427). Carbon starvation in leaves at filling stage (PubMed:38183427). Decreased chlorophyll levels, damage to the chloroplast structure, increased reactive oxygen species (ROS) accumulation in leaves, leading to leaf cell death and premature senescence phenotype at filling stage (PubMed:38183427).</text>
</comment>
<comment type="similarity">
    <text evidence="4">Belongs to the SWEET sugar transporter family.</text>
</comment>
<gene>
    <name type="primary">SWEET1B</name>
    <name type="ordered locus">Os05g0426000</name>
    <name type="ordered locus">LOC_Os05g35140</name>
    <name type="ORF">OsJ_18606</name>
    <name type="ORF">OSJNBa0044P19.5</name>
</gene>
<name>SWT1B_ORYSJ</name>
<sequence length="261" mass="27622">MEDLAKFLFGVSGNVIALFLFLSPVPTFWRIIRRKSTEDFSGVPYNMTLINCLLSAWYGLPFVSPNNILVSTINGAGAVIETAYVVVFLVFASTHKTRLRTLGLAAAVASVFAAVALVSLLALHGQHRKLLCGVAATVCSICMYASPLSIMRLVIKTKSVEYMPFLMSLAVFLCGTSWFIYGLLGRDPFVTIPNGCGSFLGAVQLVLYAIYRNNKGAGGGSGGKQAGDDDVEMAEGRNNKVADGGAADDDSTAGGKAGTEV</sequence>
<organism>
    <name type="scientific">Oryza sativa subsp. japonica</name>
    <name type="common">Rice</name>
    <dbReference type="NCBI Taxonomy" id="39947"/>
    <lineage>
        <taxon>Eukaryota</taxon>
        <taxon>Viridiplantae</taxon>
        <taxon>Streptophyta</taxon>
        <taxon>Embryophyta</taxon>
        <taxon>Tracheophyta</taxon>
        <taxon>Spermatophyta</taxon>
        <taxon>Magnoliopsida</taxon>
        <taxon>Liliopsida</taxon>
        <taxon>Poales</taxon>
        <taxon>Poaceae</taxon>
        <taxon>BOP clade</taxon>
        <taxon>Oryzoideae</taxon>
        <taxon>Oryzeae</taxon>
        <taxon>Oryzinae</taxon>
        <taxon>Oryza</taxon>
        <taxon>Oryza sativa</taxon>
    </lineage>
</organism>
<dbReference type="EMBL" id="AC135419">
    <property type="protein sequence ID" value="AAV25007.1"/>
    <property type="molecule type" value="Genomic_DNA"/>
</dbReference>
<dbReference type="EMBL" id="AP008211">
    <property type="protein sequence ID" value="BAF17513.1"/>
    <property type="molecule type" value="Genomic_DNA"/>
</dbReference>
<dbReference type="EMBL" id="AP014961">
    <property type="protein sequence ID" value="BAS94110.1"/>
    <property type="molecule type" value="Genomic_DNA"/>
</dbReference>
<dbReference type="EMBL" id="CM000142">
    <property type="protein sequence ID" value="EEE63783.1"/>
    <property type="molecule type" value="Genomic_DNA"/>
</dbReference>
<dbReference type="EMBL" id="AK063475">
    <property type="protein sequence ID" value="BAG88723.1"/>
    <property type="molecule type" value="mRNA"/>
</dbReference>
<dbReference type="RefSeq" id="XP_015639256.1">
    <property type="nucleotide sequence ID" value="XM_015783770.1"/>
</dbReference>
<dbReference type="SMR" id="Q60EC2"/>
<dbReference type="FunCoup" id="Q60EC2">
    <property type="interactions" value="517"/>
</dbReference>
<dbReference type="PaxDb" id="39947-Q60EC2"/>
<dbReference type="EnsemblPlants" id="Os05t0426000-01">
    <property type="protein sequence ID" value="Os05t0426000-01"/>
    <property type="gene ID" value="Os05g0426000"/>
</dbReference>
<dbReference type="Gramene" id="Os05t0426000-01">
    <property type="protein sequence ID" value="Os05t0426000-01"/>
    <property type="gene ID" value="Os05g0426000"/>
</dbReference>
<dbReference type="KEGG" id="dosa:Os05g0426000"/>
<dbReference type="eggNOG" id="KOG1623">
    <property type="taxonomic scope" value="Eukaryota"/>
</dbReference>
<dbReference type="HOGENOM" id="CLU_048643_1_0_1"/>
<dbReference type="InParanoid" id="Q60EC2"/>
<dbReference type="OMA" id="HMNAMEM"/>
<dbReference type="OrthoDB" id="409725at2759"/>
<dbReference type="Proteomes" id="UP000000763">
    <property type="component" value="Chromosome 5"/>
</dbReference>
<dbReference type="Proteomes" id="UP000007752">
    <property type="component" value="Chromosome 5"/>
</dbReference>
<dbReference type="Proteomes" id="UP000059680">
    <property type="component" value="Chromosome 5"/>
</dbReference>
<dbReference type="GO" id="GO:0016020">
    <property type="term" value="C:membrane"/>
    <property type="evidence" value="ECO:0000318"/>
    <property type="project" value="GO_Central"/>
</dbReference>
<dbReference type="GO" id="GO:0005886">
    <property type="term" value="C:plasma membrane"/>
    <property type="evidence" value="ECO:0000314"/>
    <property type="project" value="UniProtKB"/>
</dbReference>
<dbReference type="GO" id="GO:0042803">
    <property type="term" value="F:protein homodimerization activity"/>
    <property type="evidence" value="ECO:0000314"/>
    <property type="project" value="UniProtKB"/>
</dbReference>
<dbReference type="GO" id="GO:0051119">
    <property type="term" value="F:sugar transmembrane transporter activity"/>
    <property type="evidence" value="ECO:0000314"/>
    <property type="project" value="UniProtKB"/>
</dbReference>
<dbReference type="GO" id="GO:0008643">
    <property type="term" value="P:carbohydrate transport"/>
    <property type="evidence" value="ECO:0000318"/>
    <property type="project" value="GO_Central"/>
</dbReference>
<dbReference type="FunFam" id="1.20.1280.290:FF:000002">
    <property type="entry name" value="Bidirectional sugar transporter SWEET"/>
    <property type="match status" value="1"/>
</dbReference>
<dbReference type="FunFam" id="1.20.1280.290:FF:000014">
    <property type="entry name" value="Bidirectional sugar transporter SWEET"/>
    <property type="match status" value="1"/>
</dbReference>
<dbReference type="Gene3D" id="1.20.1280.290">
    <property type="match status" value="2"/>
</dbReference>
<dbReference type="InterPro" id="IPR047664">
    <property type="entry name" value="SWEET"/>
</dbReference>
<dbReference type="InterPro" id="IPR004316">
    <property type="entry name" value="SWEET_rpt"/>
</dbReference>
<dbReference type="PANTHER" id="PTHR10791:SF44">
    <property type="entry name" value="BIDIRECTIONAL SUGAR TRANSPORTER SWEET1"/>
    <property type="match status" value="1"/>
</dbReference>
<dbReference type="PANTHER" id="PTHR10791">
    <property type="entry name" value="RAG1-ACTIVATING PROTEIN 1"/>
    <property type="match status" value="1"/>
</dbReference>
<dbReference type="Pfam" id="PF03083">
    <property type="entry name" value="MtN3_slv"/>
    <property type="match status" value="2"/>
</dbReference>
<feature type="chain" id="PRO_0000404119" description="Bidirectional sugar transporter SWEET1b">
    <location>
        <begin position="1"/>
        <end position="261"/>
    </location>
</feature>
<feature type="topological domain" description="Extracellular" evidence="1">
    <location>
        <begin position="1"/>
        <end position="6"/>
    </location>
</feature>
<feature type="transmembrane region" description="Helical; Name=1" evidence="1">
    <location>
        <begin position="7"/>
        <end position="27"/>
    </location>
</feature>
<feature type="topological domain" description="Cytoplasmic" evidence="1">
    <location>
        <begin position="28"/>
        <end position="42"/>
    </location>
</feature>
<feature type="transmembrane region" description="Helical; Name=2" evidence="1">
    <location>
        <begin position="43"/>
        <end position="63"/>
    </location>
</feature>
<feature type="topological domain" description="Extracellular" evidence="1">
    <location>
        <begin position="64"/>
        <end position="71"/>
    </location>
</feature>
<feature type="transmembrane region" description="Helical; Name=3" evidence="1">
    <location>
        <begin position="72"/>
        <end position="92"/>
    </location>
</feature>
<feature type="topological domain" description="Cytoplasmic" evidence="1">
    <location>
        <begin position="93"/>
        <end position="101"/>
    </location>
</feature>
<feature type="transmembrane region" description="Helical; Name=4" evidence="1">
    <location>
        <begin position="102"/>
        <end position="122"/>
    </location>
</feature>
<feature type="topological domain" description="Extracellular" evidence="1">
    <location>
        <begin position="123"/>
        <end position="129"/>
    </location>
</feature>
<feature type="transmembrane region" description="Helical; Name=5" evidence="1">
    <location>
        <begin position="130"/>
        <end position="150"/>
    </location>
</feature>
<feature type="topological domain" description="Cytoplasmic" evidence="1">
    <location>
        <begin position="151"/>
        <end position="164"/>
    </location>
</feature>
<feature type="transmembrane region" description="Helical; Name=6" evidence="1">
    <location>
        <begin position="165"/>
        <end position="185"/>
    </location>
</feature>
<feature type="topological domain" description="Extracellular" evidence="1">
    <location>
        <begin position="186"/>
        <end position="189"/>
    </location>
</feature>
<feature type="transmembrane region" description="Helical; Name=7" evidence="1">
    <location>
        <begin position="190"/>
        <end position="210"/>
    </location>
</feature>
<feature type="topological domain" description="Cytoplasmic" evidence="1">
    <location>
        <begin position="211"/>
        <end position="261"/>
    </location>
</feature>
<feature type="domain" description="MtN3/slv 1">
    <location>
        <begin position="7"/>
        <end position="95"/>
    </location>
</feature>
<feature type="domain" description="MtN3/slv 2">
    <location>
        <begin position="133"/>
        <end position="215"/>
    </location>
</feature>
<feature type="region of interest" description="Disordered" evidence="2">
    <location>
        <begin position="218"/>
        <end position="261"/>
    </location>
</feature>
<protein>
    <recommendedName>
        <fullName>Bidirectional sugar transporter SWEET1b</fullName>
        <shortName>OsSWEET1b</shortName>
    </recommendedName>
</protein>
<reference key="1">
    <citation type="journal article" date="2005" name="Mol. Genet. Genomics">
        <title>A fine physical map of the rice chromosome 5.</title>
        <authorList>
            <person name="Cheng C.-H."/>
            <person name="Chung M.C."/>
            <person name="Liu S.-M."/>
            <person name="Chen S.-K."/>
            <person name="Kao F.Y."/>
            <person name="Lin S.-J."/>
            <person name="Hsiao S.-H."/>
            <person name="Tseng I.C."/>
            <person name="Hsing Y.-I.C."/>
            <person name="Wu H.-P."/>
            <person name="Chen C.-S."/>
            <person name="Shaw J.-F."/>
            <person name="Wu J."/>
            <person name="Matsumoto T."/>
            <person name="Sasaki T."/>
            <person name="Chen H.-C."/>
            <person name="Chow T.-Y."/>
        </authorList>
    </citation>
    <scope>NUCLEOTIDE SEQUENCE [LARGE SCALE GENOMIC DNA]</scope>
    <source>
        <strain>cv. Nipponbare</strain>
    </source>
</reference>
<reference key="2">
    <citation type="journal article" date="2005" name="Nature">
        <title>The map-based sequence of the rice genome.</title>
        <authorList>
            <consortium name="International rice genome sequencing project (IRGSP)"/>
        </authorList>
    </citation>
    <scope>NUCLEOTIDE SEQUENCE [LARGE SCALE GENOMIC DNA]</scope>
    <source>
        <strain>cv. Nipponbare</strain>
    </source>
</reference>
<reference key="3">
    <citation type="journal article" date="2008" name="Nucleic Acids Res.">
        <title>The rice annotation project database (RAP-DB): 2008 update.</title>
        <authorList>
            <consortium name="The rice annotation project (RAP)"/>
        </authorList>
    </citation>
    <scope>GENOME REANNOTATION</scope>
    <source>
        <strain>cv. Nipponbare</strain>
    </source>
</reference>
<reference key="4">
    <citation type="journal article" date="2013" name="Rice">
        <title>Improvement of the Oryza sativa Nipponbare reference genome using next generation sequence and optical map data.</title>
        <authorList>
            <person name="Kawahara Y."/>
            <person name="de la Bastide M."/>
            <person name="Hamilton J.P."/>
            <person name="Kanamori H."/>
            <person name="McCombie W.R."/>
            <person name="Ouyang S."/>
            <person name="Schwartz D.C."/>
            <person name="Tanaka T."/>
            <person name="Wu J."/>
            <person name="Zhou S."/>
            <person name="Childs K.L."/>
            <person name="Davidson R.M."/>
            <person name="Lin H."/>
            <person name="Quesada-Ocampo L."/>
            <person name="Vaillancourt B."/>
            <person name="Sakai H."/>
            <person name="Lee S.S."/>
            <person name="Kim J."/>
            <person name="Numa H."/>
            <person name="Itoh T."/>
            <person name="Buell C.R."/>
            <person name="Matsumoto T."/>
        </authorList>
    </citation>
    <scope>GENOME REANNOTATION</scope>
    <source>
        <strain>cv. Nipponbare</strain>
    </source>
</reference>
<reference key="5">
    <citation type="journal article" date="2005" name="PLoS Biol.">
        <title>The genomes of Oryza sativa: a history of duplications.</title>
        <authorList>
            <person name="Yu J."/>
            <person name="Wang J."/>
            <person name="Lin W."/>
            <person name="Li S."/>
            <person name="Li H."/>
            <person name="Zhou J."/>
            <person name="Ni P."/>
            <person name="Dong W."/>
            <person name="Hu S."/>
            <person name="Zeng C."/>
            <person name="Zhang J."/>
            <person name="Zhang Y."/>
            <person name="Li R."/>
            <person name="Xu Z."/>
            <person name="Li S."/>
            <person name="Li X."/>
            <person name="Zheng H."/>
            <person name="Cong L."/>
            <person name="Lin L."/>
            <person name="Yin J."/>
            <person name="Geng J."/>
            <person name="Li G."/>
            <person name="Shi J."/>
            <person name="Liu J."/>
            <person name="Lv H."/>
            <person name="Li J."/>
            <person name="Wang J."/>
            <person name="Deng Y."/>
            <person name="Ran L."/>
            <person name="Shi X."/>
            <person name="Wang X."/>
            <person name="Wu Q."/>
            <person name="Li C."/>
            <person name="Ren X."/>
            <person name="Wang J."/>
            <person name="Wang X."/>
            <person name="Li D."/>
            <person name="Liu D."/>
            <person name="Zhang X."/>
            <person name="Ji Z."/>
            <person name="Zhao W."/>
            <person name="Sun Y."/>
            <person name="Zhang Z."/>
            <person name="Bao J."/>
            <person name="Han Y."/>
            <person name="Dong L."/>
            <person name="Ji J."/>
            <person name="Chen P."/>
            <person name="Wu S."/>
            <person name="Liu J."/>
            <person name="Xiao Y."/>
            <person name="Bu D."/>
            <person name="Tan J."/>
            <person name="Yang L."/>
            <person name="Ye C."/>
            <person name="Zhang J."/>
            <person name="Xu J."/>
            <person name="Zhou Y."/>
            <person name="Yu Y."/>
            <person name="Zhang B."/>
            <person name="Zhuang S."/>
            <person name="Wei H."/>
            <person name="Liu B."/>
            <person name="Lei M."/>
            <person name="Yu H."/>
            <person name="Li Y."/>
            <person name="Xu H."/>
            <person name="Wei S."/>
            <person name="He X."/>
            <person name="Fang L."/>
            <person name="Zhang Z."/>
            <person name="Zhang Y."/>
            <person name="Huang X."/>
            <person name="Su Z."/>
            <person name="Tong W."/>
            <person name="Li J."/>
            <person name="Tong Z."/>
            <person name="Li S."/>
            <person name="Ye J."/>
            <person name="Wang L."/>
            <person name="Fang L."/>
            <person name="Lei T."/>
            <person name="Chen C.-S."/>
            <person name="Chen H.-C."/>
            <person name="Xu Z."/>
            <person name="Li H."/>
            <person name="Huang H."/>
            <person name="Zhang F."/>
            <person name="Xu H."/>
            <person name="Li N."/>
            <person name="Zhao C."/>
            <person name="Li S."/>
            <person name="Dong L."/>
            <person name="Huang Y."/>
            <person name="Li L."/>
            <person name="Xi Y."/>
            <person name="Qi Q."/>
            <person name="Li W."/>
            <person name="Zhang B."/>
            <person name="Hu W."/>
            <person name="Zhang Y."/>
            <person name="Tian X."/>
            <person name="Jiao Y."/>
            <person name="Liang X."/>
            <person name="Jin J."/>
            <person name="Gao L."/>
            <person name="Zheng W."/>
            <person name="Hao B."/>
            <person name="Liu S.-M."/>
            <person name="Wang W."/>
            <person name="Yuan L."/>
            <person name="Cao M."/>
            <person name="McDermott J."/>
            <person name="Samudrala R."/>
            <person name="Wang J."/>
            <person name="Wong G.K.-S."/>
            <person name="Yang H."/>
        </authorList>
    </citation>
    <scope>NUCLEOTIDE SEQUENCE [LARGE SCALE GENOMIC DNA]</scope>
    <source>
        <strain>cv. Nipponbare</strain>
    </source>
</reference>
<reference key="6">
    <citation type="journal article" date="2003" name="Science">
        <title>Collection, mapping, and annotation of over 28,000 cDNA clones from japonica rice.</title>
        <authorList>
            <consortium name="The rice full-length cDNA consortium"/>
        </authorList>
    </citation>
    <scope>NUCLEOTIDE SEQUENCE [LARGE SCALE MRNA]</scope>
    <source>
        <strain>cv. Nipponbare</strain>
    </source>
</reference>
<reference key="7">
    <citation type="journal article" date="2010" name="Nature">
        <title>Sugar transporters for intercellular exchange and nutrition of pathogens.</title>
        <authorList>
            <person name="Chen L.-Q."/>
            <person name="Hou B.-H."/>
            <person name="Lalonde S."/>
            <person name="Takanaga H."/>
            <person name="Hartung M.L."/>
            <person name="Qu X.-Q."/>
            <person name="Guo W.-J."/>
            <person name="Kim J.-G."/>
            <person name="Underwood W."/>
            <person name="Chaudhuri B."/>
            <person name="Chermak D."/>
            <person name="Antony G."/>
            <person name="White F.F."/>
            <person name="Somerville S.C."/>
            <person name="Mudgett M.B."/>
            <person name="Frommer W.B."/>
        </authorList>
    </citation>
    <scope>GENE FAMILY</scope>
    <scope>NOMENCLATURE</scope>
</reference>
<reference key="8">
    <citation type="journal article" date="2024" name="Plant Cell Rep.">
        <title>Plasma membrane-localized hexose transporter OsSWEET1b, affects sugar metabolism and leaf senescence.</title>
        <authorList>
            <person name="Zhang Q."/>
            <person name="Chen C."/>
            <person name="Guo R."/>
            <person name="Zhu X."/>
            <person name="Tao X."/>
            <person name="He M."/>
            <person name="Li Z."/>
            <person name="Shen L."/>
            <person name="Li Q."/>
            <person name="Ren D."/>
            <person name="Hu J."/>
            <person name="Zhu L."/>
            <person name="Zhang G."/>
            <person name="Qian Q."/>
        </authorList>
    </citation>
    <scope>FUNCTION</scope>
    <scope>TRANSPORTER ACTIVITY</scope>
    <scope>SUBUNIT</scope>
    <scope>SUBCELLULAR LOCATION</scope>
    <scope>TISSUE SPECIFICITY</scope>
    <scope>DISRUPTION PHENOTYPE</scope>
</reference>
<keyword id="KW-1003">Cell membrane</keyword>
<keyword id="KW-0472">Membrane</keyword>
<keyword id="KW-1185">Reference proteome</keyword>
<keyword id="KW-0677">Repeat</keyword>
<keyword id="KW-0762">Sugar transport</keyword>
<keyword id="KW-0812">Transmembrane</keyword>
<keyword id="KW-1133">Transmembrane helix</keyword>
<keyword id="KW-0813">Transport</keyword>